<name>CIAO1_CANAL</name>
<keyword id="KW-0963">Cytoplasm</keyword>
<keyword id="KW-0539">Nucleus</keyword>
<keyword id="KW-1185">Reference proteome</keyword>
<keyword id="KW-0677">Repeat</keyword>
<keyword id="KW-0853">WD repeat</keyword>
<proteinExistence type="inferred from homology"/>
<gene>
    <name evidence="1" type="primary">CIA1</name>
    <name type="ordered locus">CAALFM_C502730CA</name>
    <name type="ORF">CaO19.11769</name>
    <name type="ORF">CaO19.4293</name>
</gene>
<protein>
    <recommendedName>
        <fullName evidence="1">Probable cytosolic iron-sulfur protein assembly protein 1</fullName>
    </recommendedName>
</protein>
<accession>Q5AG86</accession>
<accession>A0A1D8PNI7</accession>
<reference key="1">
    <citation type="journal article" date="2004" name="Proc. Natl. Acad. Sci. U.S.A.">
        <title>The diploid genome sequence of Candida albicans.</title>
        <authorList>
            <person name="Jones T."/>
            <person name="Federspiel N.A."/>
            <person name="Chibana H."/>
            <person name="Dungan J."/>
            <person name="Kalman S."/>
            <person name="Magee B.B."/>
            <person name="Newport G."/>
            <person name="Thorstenson Y.R."/>
            <person name="Agabian N."/>
            <person name="Magee P.T."/>
            <person name="Davis R.W."/>
            <person name="Scherer S."/>
        </authorList>
    </citation>
    <scope>NUCLEOTIDE SEQUENCE [LARGE SCALE GENOMIC DNA]</scope>
    <source>
        <strain>SC5314 / ATCC MYA-2876</strain>
    </source>
</reference>
<reference key="2">
    <citation type="journal article" date="2007" name="Genome Biol.">
        <title>Assembly of the Candida albicans genome into sixteen supercontigs aligned on the eight chromosomes.</title>
        <authorList>
            <person name="van het Hoog M."/>
            <person name="Rast T.J."/>
            <person name="Martchenko M."/>
            <person name="Grindle S."/>
            <person name="Dignard D."/>
            <person name="Hogues H."/>
            <person name="Cuomo C."/>
            <person name="Berriman M."/>
            <person name="Scherer S."/>
            <person name="Magee B.B."/>
            <person name="Whiteway M."/>
            <person name="Chibana H."/>
            <person name="Nantel A."/>
            <person name="Magee P.T."/>
        </authorList>
    </citation>
    <scope>GENOME REANNOTATION</scope>
    <source>
        <strain>SC5314 / ATCC MYA-2876</strain>
    </source>
</reference>
<reference key="3">
    <citation type="journal article" date="2013" name="Genome Biol.">
        <title>Assembly of a phased diploid Candida albicans genome facilitates allele-specific measurements and provides a simple model for repeat and indel structure.</title>
        <authorList>
            <person name="Muzzey D."/>
            <person name="Schwartz K."/>
            <person name="Weissman J.S."/>
            <person name="Sherlock G."/>
        </authorList>
    </citation>
    <scope>NUCLEOTIDE SEQUENCE [LARGE SCALE GENOMIC DNA]</scope>
    <scope>GENOME REANNOTATION</scope>
    <source>
        <strain>SC5314 / ATCC MYA-2876</strain>
    </source>
</reference>
<organism>
    <name type="scientific">Candida albicans (strain SC5314 / ATCC MYA-2876)</name>
    <name type="common">Yeast</name>
    <dbReference type="NCBI Taxonomy" id="237561"/>
    <lineage>
        <taxon>Eukaryota</taxon>
        <taxon>Fungi</taxon>
        <taxon>Dikarya</taxon>
        <taxon>Ascomycota</taxon>
        <taxon>Saccharomycotina</taxon>
        <taxon>Pichiomycetes</taxon>
        <taxon>Debaryomycetaceae</taxon>
        <taxon>Candida/Lodderomyces clade</taxon>
        <taxon>Candida</taxon>
    </lineage>
</organism>
<evidence type="ECO:0000255" key="1">
    <source>
        <dbReference type="HAMAP-Rule" id="MF_03037"/>
    </source>
</evidence>
<comment type="function">
    <text evidence="1">Essential component of the cytosolic iron-sulfur (Fe/S) protein assembly machinery. Required for the maturation of extramitochondrial Fe/S proteins.</text>
</comment>
<comment type="subunit">
    <text evidence="1">Interacts with NAR1.</text>
</comment>
<comment type="subcellular location">
    <subcellularLocation>
        <location evidence="1">Cytoplasm</location>
    </subcellularLocation>
    <subcellularLocation>
        <location evidence="1">Nucleus</location>
    </subcellularLocation>
    <text evidence="1">Preferentially localized to the nucleus.</text>
</comment>
<comment type="similarity">
    <text evidence="1">Belongs to the WD repeat CIA1 family.</text>
</comment>
<feature type="chain" id="PRO_0000382508" description="Probable cytosolic iron-sulfur protein assembly protein 1">
    <location>
        <begin position="1"/>
        <end position="383"/>
    </location>
</feature>
<feature type="repeat" description="WD 1">
    <location>
        <begin position="10"/>
        <end position="49"/>
    </location>
</feature>
<feature type="repeat" description="WD 2">
    <location>
        <begin position="56"/>
        <end position="108"/>
    </location>
</feature>
<feature type="repeat" description="WD 3">
    <location>
        <begin position="135"/>
        <end position="175"/>
    </location>
</feature>
<feature type="repeat" description="WD 4">
    <location>
        <begin position="182"/>
        <end position="221"/>
    </location>
</feature>
<feature type="repeat" description="WD 5">
    <location>
        <begin position="228"/>
        <end position="275"/>
    </location>
</feature>
<feature type="repeat" description="WD 6">
    <location>
        <begin position="302"/>
        <end position="341"/>
    </location>
</feature>
<feature type="repeat" description="WD 7">
    <location>
        <begin position="349"/>
        <end position="383"/>
    </location>
</feature>
<dbReference type="EMBL" id="CP017627">
    <property type="protein sequence ID" value="AOW29698.1"/>
    <property type="molecule type" value="Genomic_DNA"/>
</dbReference>
<dbReference type="RefSeq" id="XP_720601.2">
    <property type="nucleotide sequence ID" value="XM_715508.2"/>
</dbReference>
<dbReference type="SMR" id="Q5AG86"/>
<dbReference type="FunCoup" id="Q5AG86">
    <property type="interactions" value="70"/>
</dbReference>
<dbReference type="STRING" id="237561.Q5AG86"/>
<dbReference type="EnsemblFungi" id="C5_02730C_A-T">
    <property type="protein sequence ID" value="C5_02730C_A-T-p1"/>
    <property type="gene ID" value="C5_02730C_A"/>
</dbReference>
<dbReference type="GeneID" id="3637738"/>
<dbReference type="KEGG" id="cal:CAALFM_C502730CA"/>
<dbReference type="CGD" id="CAL0000178398">
    <property type="gene designation" value="orf19.11769"/>
</dbReference>
<dbReference type="VEuPathDB" id="FungiDB:C5_02730C_A"/>
<dbReference type="eggNOG" id="KOG0645">
    <property type="taxonomic scope" value="Eukaryota"/>
</dbReference>
<dbReference type="HOGENOM" id="CLU_000288_57_8_1"/>
<dbReference type="InParanoid" id="Q5AG86"/>
<dbReference type="OrthoDB" id="284782at2759"/>
<dbReference type="PRO" id="PR:Q5AG86"/>
<dbReference type="Proteomes" id="UP000000559">
    <property type="component" value="Chromosome 5"/>
</dbReference>
<dbReference type="GO" id="GO:0097361">
    <property type="term" value="C:cytosolic [4Fe-4S] assembly targeting complex"/>
    <property type="evidence" value="ECO:0000318"/>
    <property type="project" value="GO_Central"/>
</dbReference>
<dbReference type="GO" id="GO:0005634">
    <property type="term" value="C:nucleus"/>
    <property type="evidence" value="ECO:0007669"/>
    <property type="project" value="UniProtKB-SubCell"/>
</dbReference>
<dbReference type="GO" id="GO:0016226">
    <property type="term" value="P:iron-sulfur cluster assembly"/>
    <property type="evidence" value="ECO:0000318"/>
    <property type="project" value="GO_Central"/>
</dbReference>
<dbReference type="GO" id="GO:0002098">
    <property type="term" value="P:tRNA wobble uridine modification"/>
    <property type="evidence" value="ECO:0007669"/>
    <property type="project" value="EnsemblFungi"/>
</dbReference>
<dbReference type="CDD" id="cd00200">
    <property type="entry name" value="WD40"/>
    <property type="match status" value="1"/>
</dbReference>
<dbReference type="FunFam" id="2.130.10.10:FF:001309">
    <property type="entry name" value="Probable cytosolic iron-sulfur protein assembly protein 1"/>
    <property type="match status" value="1"/>
</dbReference>
<dbReference type="Gene3D" id="2.130.10.10">
    <property type="entry name" value="YVTN repeat-like/Quinoprotein amine dehydrogenase"/>
    <property type="match status" value="1"/>
</dbReference>
<dbReference type="HAMAP" id="MF_03037">
    <property type="entry name" value="ciao1"/>
    <property type="match status" value="1"/>
</dbReference>
<dbReference type="InterPro" id="IPR028608">
    <property type="entry name" value="CIAO1/Cia1"/>
</dbReference>
<dbReference type="InterPro" id="IPR020472">
    <property type="entry name" value="G-protein_beta_WD-40_rep"/>
</dbReference>
<dbReference type="InterPro" id="IPR015943">
    <property type="entry name" value="WD40/YVTN_repeat-like_dom_sf"/>
</dbReference>
<dbReference type="InterPro" id="IPR036322">
    <property type="entry name" value="WD40_repeat_dom_sf"/>
</dbReference>
<dbReference type="InterPro" id="IPR001680">
    <property type="entry name" value="WD40_rpt"/>
</dbReference>
<dbReference type="PANTHER" id="PTHR19920:SF0">
    <property type="entry name" value="CYTOSOLIC IRON-SULFUR PROTEIN ASSEMBLY PROTEIN CIAO1-RELATED"/>
    <property type="match status" value="1"/>
</dbReference>
<dbReference type="PANTHER" id="PTHR19920">
    <property type="entry name" value="WD40 PROTEIN CIAO1"/>
    <property type="match status" value="1"/>
</dbReference>
<dbReference type="Pfam" id="PF00400">
    <property type="entry name" value="WD40"/>
    <property type="match status" value="6"/>
</dbReference>
<dbReference type="PRINTS" id="PR00320">
    <property type="entry name" value="GPROTEINBRPT"/>
</dbReference>
<dbReference type="SMART" id="SM00320">
    <property type="entry name" value="WD40"/>
    <property type="match status" value="7"/>
</dbReference>
<dbReference type="SUPFAM" id="SSF50978">
    <property type="entry name" value="WD40 repeat-like"/>
    <property type="match status" value="1"/>
</dbReference>
<dbReference type="PROSITE" id="PS00678">
    <property type="entry name" value="WD_REPEATS_1"/>
    <property type="match status" value="1"/>
</dbReference>
<dbReference type="PROSITE" id="PS50082">
    <property type="entry name" value="WD_REPEATS_2"/>
    <property type="match status" value="4"/>
</dbReference>
<dbReference type="PROSITE" id="PS50294">
    <property type="entry name" value="WD_REPEATS_REGION"/>
    <property type="match status" value="1"/>
</dbReference>
<sequence length="383" mass="42773">MVQLLHSIKAHNDKVWSVSVHPTLPIIATASTDKSTKLYKLSARQKFPLVAKLEDTHKRSIRSVAFKPPLGGADTPKSDFLDLPALAAGSFDSTISVWGIDEPDVEYDIEEVIANQKEILTSPNNEWNLMAIIEGHENEVKAVDWNFQGQYLASCSRDKTVWIWETDPETLEEFECVAVLNDHSQDVKNVSWHPSMNILASSSYDDTIRIYQQDIAGDEWSCVGILNGHEGTVWCSKFESLKSPIADSSVLRLVSASDDLSVRIWVAKREQEDDEQAKLELPSSIRHTNEMVWEVESVLPSVHKYPVYSVAWSALTGKIASAGSDGKIVVYSETEKGKWVIDSIHEGAHGVHEINCVIWAQLDDENEILVSAGDDGYVNLWKI</sequence>